<protein>
    <recommendedName>
        <fullName evidence="1">tRNA uridine(34) hydroxylase</fullName>
        <ecNumber evidence="1">1.14.-.-</ecNumber>
    </recommendedName>
    <alternativeName>
        <fullName evidence="1">tRNA hydroxylation protein O</fullName>
    </alternativeName>
</protein>
<dbReference type="EC" id="1.14.-.-" evidence="1"/>
<dbReference type="EMBL" id="CP000668">
    <property type="protein sequence ID" value="ABP40251.1"/>
    <property type="molecule type" value="Genomic_DNA"/>
</dbReference>
<dbReference type="RefSeq" id="WP_002211854.1">
    <property type="nucleotide sequence ID" value="NZ_CP009715.1"/>
</dbReference>
<dbReference type="SMR" id="A4TLT9"/>
<dbReference type="KEGG" id="ypp:YPDSF_1866"/>
<dbReference type="PATRIC" id="fig|386656.14.peg.3322"/>
<dbReference type="GO" id="GO:0016705">
    <property type="term" value="F:oxidoreductase activity, acting on paired donors, with incorporation or reduction of molecular oxygen"/>
    <property type="evidence" value="ECO:0007669"/>
    <property type="project" value="UniProtKB-UniRule"/>
</dbReference>
<dbReference type="GO" id="GO:0006400">
    <property type="term" value="P:tRNA modification"/>
    <property type="evidence" value="ECO:0007669"/>
    <property type="project" value="UniProtKB-UniRule"/>
</dbReference>
<dbReference type="CDD" id="cd01518">
    <property type="entry name" value="RHOD_YceA"/>
    <property type="match status" value="1"/>
</dbReference>
<dbReference type="Gene3D" id="3.30.70.100">
    <property type="match status" value="1"/>
</dbReference>
<dbReference type="Gene3D" id="3.40.250.10">
    <property type="entry name" value="Rhodanese-like domain"/>
    <property type="match status" value="1"/>
</dbReference>
<dbReference type="HAMAP" id="MF_00469">
    <property type="entry name" value="TrhO"/>
    <property type="match status" value="1"/>
</dbReference>
<dbReference type="InterPro" id="IPR001763">
    <property type="entry name" value="Rhodanese-like_dom"/>
</dbReference>
<dbReference type="InterPro" id="IPR036873">
    <property type="entry name" value="Rhodanese-like_dom_sf"/>
</dbReference>
<dbReference type="InterPro" id="IPR022111">
    <property type="entry name" value="Rhodanese_C"/>
</dbReference>
<dbReference type="InterPro" id="IPR020936">
    <property type="entry name" value="TrhO"/>
</dbReference>
<dbReference type="InterPro" id="IPR040503">
    <property type="entry name" value="TRHO_N"/>
</dbReference>
<dbReference type="NCBIfam" id="NF001133">
    <property type="entry name" value="PRK00142.1-1"/>
    <property type="match status" value="1"/>
</dbReference>
<dbReference type="PANTHER" id="PTHR43846:SF1">
    <property type="entry name" value="TRNA URIDINE(34) HYDROXYLASE"/>
    <property type="match status" value="1"/>
</dbReference>
<dbReference type="PANTHER" id="PTHR43846">
    <property type="entry name" value="UPF0176 PROTEIN YCEA"/>
    <property type="match status" value="1"/>
</dbReference>
<dbReference type="Pfam" id="PF00581">
    <property type="entry name" value="Rhodanese"/>
    <property type="match status" value="1"/>
</dbReference>
<dbReference type="Pfam" id="PF12368">
    <property type="entry name" value="Rhodanese_C"/>
    <property type="match status" value="1"/>
</dbReference>
<dbReference type="Pfam" id="PF17773">
    <property type="entry name" value="UPF0176_N"/>
    <property type="match status" value="1"/>
</dbReference>
<dbReference type="SMART" id="SM00450">
    <property type="entry name" value="RHOD"/>
    <property type="match status" value="1"/>
</dbReference>
<dbReference type="SUPFAM" id="SSF52821">
    <property type="entry name" value="Rhodanese/Cell cycle control phosphatase"/>
    <property type="match status" value="1"/>
</dbReference>
<dbReference type="PROSITE" id="PS50206">
    <property type="entry name" value="RHODANESE_3"/>
    <property type="match status" value="1"/>
</dbReference>
<organism>
    <name type="scientific">Yersinia pestis (strain Pestoides F)</name>
    <dbReference type="NCBI Taxonomy" id="386656"/>
    <lineage>
        <taxon>Bacteria</taxon>
        <taxon>Pseudomonadati</taxon>
        <taxon>Pseudomonadota</taxon>
        <taxon>Gammaproteobacteria</taxon>
        <taxon>Enterobacterales</taxon>
        <taxon>Yersiniaceae</taxon>
        <taxon>Yersinia</taxon>
    </lineage>
</organism>
<gene>
    <name evidence="1" type="primary">trhO</name>
    <name type="ordered locus">YPDSF_1866</name>
</gene>
<sequence length="355" mass="40550">MPVLHNRISNEELKARMLAETEPRTTVSFYKYFTLEDAKTFRDNLYSQFVKLGVFGRVYVAKEGINAQISVPANRYDEFKIALFASHPALDQVRLNVAHEDDGKSFWVLRLKVRERIVADGIDDDSFDPANIGHYLKADQVNQMIDDPDTLFVDMRNHYEYEVGHFENAIEVPSDTFREQLPMAVDMLQHDKEKNIVMYCTGGIRCEKASAYMLHNGFKNVYHVEGGIIEYARKAKEQGLPLKFIGKNFVFDERMGERISDDVIAHCHQCGTPCDAHTNCKNDGCHLLFIQCPVCAAKFEGCCSQICQEELKLPQEEQRSRRAGRENGIKIFNKSKGLLQATMHIPSPEKSADEK</sequence>
<reference key="1">
    <citation type="submission" date="2007-02" db="EMBL/GenBank/DDBJ databases">
        <title>Complete sequence of chromosome of Yersinia pestis Pestoides F.</title>
        <authorList>
            <consortium name="US DOE Joint Genome Institute"/>
            <person name="Copeland A."/>
            <person name="Lucas S."/>
            <person name="Lapidus A."/>
            <person name="Barry K."/>
            <person name="Detter J.C."/>
            <person name="Glavina del Rio T."/>
            <person name="Hammon N."/>
            <person name="Israni S."/>
            <person name="Dalin E."/>
            <person name="Tice H."/>
            <person name="Pitluck S."/>
            <person name="Di Bartolo G."/>
            <person name="Chain P."/>
            <person name="Malfatti S."/>
            <person name="Shin M."/>
            <person name="Vergez L."/>
            <person name="Schmutz J."/>
            <person name="Larimer F."/>
            <person name="Land M."/>
            <person name="Hauser L."/>
            <person name="Worsham P."/>
            <person name="Chu M."/>
            <person name="Bearden S."/>
            <person name="Garcia E."/>
            <person name="Richardson P."/>
        </authorList>
    </citation>
    <scope>NUCLEOTIDE SEQUENCE [LARGE SCALE GENOMIC DNA]</scope>
    <source>
        <strain>Pestoides F</strain>
    </source>
</reference>
<keyword id="KW-0560">Oxidoreductase</keyword>
<keyword id="KW-0819">tRNA processing</keyword>
<proteinExistence type="inferred from homology"/>
<feature type="chain" id="PRO_1000013796" description="tRNA uridine(34) hydroxylase">
    <location>
        <begin position="1"/>
        <end position="355"/>
    </location>
</feature>
<feature type="domain" description="Rhodanese" evidence="1">
    <location>
        <begin position="146"/>
        <end position="240"/>
    </location>
</feature>
<feature type="region of interest" description="Disordered" evidence="2">
    <location>
        <begin position="333"/>
        <end position="355"/>
    </location>
</feature>
<feature type="active site" description="Cysteine persulfide intermediate" evidence="1">
    <location>
        <position position="200"/>
    </location>
</feature>
<evidence type="ECO:0000255" key="1">
    <source>
        <dbReference type="HAMAP-Rule" id="MF_00469"/>
    </source>
</evidence>
<evidence type="ECO:0000256" key="2">
    <source>
        <dbReference type="SAM" id="MobiDB-lite"/>
    </source>
</evidence>
<comment type="function">
    <text evidence="1">Catalyzes oxygen-dependent 5-hydroxyuridine (ho5U) modification at position 34 in tRNAs.</text>
</comment>
<comment type="catalytic activity">
    <reaction evidence="1">
        <text>uridine(34) in tRNA + AH2 + O2 = 5-hydroxyuridine(34) in tRNA + A + H2O</text>
        <dbReference type="Rhea" id="RHEA:64224"/>
        <dbReference type="Rhea" id="RHEA-COMP:11727"/>
        <dbReference type="Rhea" id="RHEA-COMP:13381"/>
        <dbReference type="ChEBI" id="CHEBI:13193"/>
        <dbReference type="ChEBI" id="CHEBI:15377"/>
        <dbReference type="ChEBI" id="CHEBI:15379"/>
        <dbReference type="ChEBI" id="CHEBI:17499"/>
        <dbReference type="ChEBI" id="CHEBI:65315"/>
        <dbReference type="ChEBI" id="CHEBI:136877"/>
    </reaction>
</comment>
<comment type="similarity">
    <text evidence="1">Belongs to the TrhO family.</text>
</comment>
<name>TRHO_YERPP</name>
<accession>A4TLT9</accession>